<accession>Q34261</accession>
<dbReference type="EMBL" id="AF302174">
    <property type="protein sequence ID" value="AAL69587.1"/>
    <property type="molecule type" value="Genomic_DNA"/>
</dbReference>
<dbReference type="SMR" id="Q34261"/>
<dbReference type="GO" id="GO:0005743">
    <property type="term" value="C:mitochondrial inner membrane"/>
    <property type="evidence" value="ECO:0007669"/>
    <property type="project" value="UniProtKB-SubCell"/>
</dbReference>
<dbReference type="GO" id="GO:0045275">
    <property type="term" value="C:respiratory chain complex III"/>
    <property type="evidence" value="ECO:0007669"/>
    <property type="project" value="InterPro"/>
</dbReference>
<dbReference type="GO" id="GO:0046872">
    <property type="term" value="F:metal ion binding"/>
    <property type="evidence" value="ECO:0007669"/>
    <property type="project" value="UniProtKB-KW"/>
</dbReference>
<dbReference type="GO" id="GO:0008121">
    <property type="term" value="F:ubiquinol-cytochrome-c reductase activity"/>
    <property type="evidence" value="ECO:0007669"/>
    <property type="project" value="InterPro"/>
</dbReference>
<dbReference type="GO" id="GO:0006122">
    <property type="term" value="P:mitochondrial electron transport, ubiquinol to cytochrome c"/>
    <property type="evidence" value="ECO:0007669"/>
    <property type="project" value="TreeGrafter"/>
</dbReference>
<dbReference type="CDD" id="cd00290">
    <property type="entry name" value="cytochrome_b_C"/>
    <property type="match status" value="1"/>
</dbReference>
<dbReference type="CDD" id="cd00284">
    <property type="entry name" value="Cytochrome_b_N"/>
    <property type="match status" value="1"/>
</dbReference>
<dbReference type="FunFam" id="1.20.810.10:FF:000002">
    <property type="entry name" value="Cytochrome b"/>
    <property type="match status" value="1"/>
</dbReference>
<dbReference type="Gene3D" id="1.20.810.10">
    <property type="entry name" value="Cytochrome Bc1 Complex, Chain C"/>
    <property type="match status" value="1"/>
</dbReference>
<dbReference type="InterPro" id="IPR005798">
    <property type="entry name" value="Cyt_b/b6_C"/>
</dbReference>
<dbReference type="InterPro" id="IPR036150">
    <property type="entry name" value="Cyt_b/b6_C_sf"/>
</dbReference>
<dbReference type="InterPro" id="IPR005797">
    <property type="entry name" value="Cyt_b/b6_N"/>
</dbReference>
<dbReference type="InterPro" id="IPR027387">
    <property type="entry name" value="Cytb/b6-like_sf"/>
</dbReference>
<dbReference type="InterPro" id="IPR030689">
    <property type="entry name" value="Cytochrome_b"/>
</dbReference>
<dbReference type="InterPro" id="IPR048260">
    <property type="entry name" value="Cytochrome_b_C_euk/bac"/>
</dbReference>
<dbReference type="InterPro" id="IPR048259">
    <property type="entry name" value="Cytochrome_b_N_euk/bac"/>
</dbReference>
<dbReference type="InterPro" id="IPR016174">
    <property type="entry name" value="Di-haem_cyt_TM"/>
</dbReference>
<dbReference type="PANTHER" id="PTHR19271">
    <property type="entry name" value="CYTOCHROME B"/>
    <property type="match status" value="1"/>
</dbReference>
<dbReference type="PANTHER" id="PTHR19271:SF16">
    <property type="entry name" value="CYTOCHROME B"/>
    <property type="match status" value="1"/>
</dbReference>
<dbReference type="Pfam" id="PF00032">
    <property type="entry name" value="Cytochrom_B_C"/>
    <property type="match status" value="1"/>
</dbReference>
<dbReference type="Pfam" id="PF00033">
    <property type="entry name" value="Cytochrome_B"/>
    <property type="match status" value="1"/>
</dbReference>
<dbReference type="PIRSF" id="PIRSF038885">
    <property type="entry name" value="COB"/>
    <property type="match status" value="1"/>
</dbReference>
<dbReference type="SUPFAM" id="SSF81648">
    <property type="entry name" value="a domain/subunit of cytochrome bc1 complex (Ubiquinol-cytochrome c reductase)"/>
    <property type="match status" value="1"/>
</dbReference>
<dbReference type="SUPFAM" id="SSF81342">
    <property type="entry name" value="Transmembrane di-heme cytochromes"/>
    <property type="match status" value="1"/>
</dbReference>
<dbReference type="PROSITE" id="PS51003">
    <property type="entry name" value="CYTB_CTER"/>
    <property type="match status" value="1"/>
</dbReference>
<dbReference type="PROSITE" id="PS51002">
    <property type="entry name" value="CYTB_NTER"/>
    <property type="match status" value="1"/>
</dbReference>
<feature type="chain" id="PRO_0000254963" description="Cytochrome b">
    <location>
        <begin position="1"/>
        <end position="379"/>
    </location>
</feature>
<feature type="transmembrane region" description="Helical" evidence="2">
    <location>
        <begin position="33"/>
        <end position="53"/>
    </location>
</feature>
<feature type="transmembrane region" description="Helical" evidence="2">
    <location>
        <begin position="77"/>
        <end position="98"/>
    </location>
</feature>
<feature type="transmembrane region" description="Helical" evidence="2">
    <location>
        <begin position="113"/>
        <end position="133"/>
    </location>
</feature>
<feature type="transmembrane region" description="Helical" evidence="2">
    <location>
        <begin position="178"/>
        <end position="198"/>
    </location>
</feature>
<feature type="transmembrane region" description="Helical" evidence="2">
    <location>
        <begin position="226"/>
        <end position="246"/>
    </location>
</feature>
<feature type="transmembrane region" description="Helical" evidence="2">
    <location>
        <begin position="288"/>
        <end position="308"/>
    </location>
</feature>
<feature type="transmembrane region" description="Helical" evidence="2">
    <location>
        <begin position="320"/>
        <end position="340"/>
    </location>
</feature>
<feature type="transmembrane region" description="Helical" evidence="2">
    <location>
        <begin position="347"/>
        <end position="367"/>
    </location>
</feature>
<feature type="binding site" description="axial binding residue" evidence="2">
    <location>
        <position position="83"/>
    </location>
    <ligand>
        <name>heme b</name>
        <dbReference type="ChEBI" id="CHEBI:60344"/>
        <label>b562</label>
    </ligand>
    <ligandPart>
        <name>Fe</name>
        <dbReference type="ChEBI" id="CHEBI:18248"/>
    </ligandPart>
</feature>
<feature type="binding site" description="axial binding residue" evidence="2">
    <location>
        <position position="97"/>
    </location>
    <ligand>
        <name>heme b</name>
        <dbReference type="ChEBI" id="CHEBI:60344"/>
        <label>b566</label>
    </ligand>
    <ligandPart>
        <name>Fe</name>
        <dbReference type="ChEBI" id="CHEBI:18248"/>
    </ligandPart>
</feature>
<feature type="binding site" description="axial binding residue" evidence="2">
    <location>
        <position position="182"/>
    </location>
    <ligand>
        <name>heme b</name>
        <dbReference type="ChEBI" id="CHEBI:60344"/>
        <label>b562</label>
    </ligand>
    <ligandPart>
        <name>Fe</name>
        <dbReference type="ChEBI" id="CHEBI:18248"/>
    </ligandPart>
</feature>
<feature type="binding site" description="axial binding residue" evidence="2">
    <location>
        <position position="196"/>
    </location>
    <ligand>
        <name>heme b</name>
        <dbReference type="ChEBI" id="CHEBI:60344"/>
        <label>b566</label>
    </ligand>
    <ligandPart>
        <name>Fe</name>
        <dbReference type="ChEBI" id="CHEBI:18248"/>
    </ligandPart>
</feature>
<feature type="binding site" evidence="2">
    <location>
        <position position="201"/>
    </location>
    <ligand>
        <name>a ubiquinone</name>
        <dbReference type="ChEBI" id="CHEBI:16389"/>
    </ligand>
</feature>
<comment type="function">
    <text evidence="2">Component of the ubiquinol-cytochrome c reductase complex (complex III or cytochrome b-c1 complex) that is part of the mitochondrial respiratory chain. The b-c1 complex mediates electron transfer from ubiquinol to cytochrome c. Contributes to the generation of a proton gradient across the mitochondrial membrane that is then used for ATP synthesis.</text>
</comment>
<comment type="cofactor">
    <cofactor evidence="2">
        <name>heme b</name>
        <dbReference type="ChEBI" id="CHEBI:60344"/>
    </cofactor>
    <text evidence="2">Binds 2 heme b groups non-covalently.</text>
</comment>
<comment type="subunit">
    <text evidence="2">The cytochrome bc1 complex contains 11 subunits: 3 respiratory subunits (MT-CYB, CYC1 and UQCRFS1), 2 core proteins (UQCRC1 and UQCRC2) and 6 low-molecular weight proteins (UQCRH/QCR6, UQCRB/QCR7, UQCRQ/QCR8, UQCR10/QCR9, UQCR11/QCR10 and a cleavage product of UQCRFS1). This cytochrome bc1 complex then forms a dimer.</text>
</comment>
<comment type="subcellular location">
    <subcellularLocation>
        <location evidence="2">Mitochondrion inner membrane</location>
        <topology evidence="2">Multi-pass membrane protein</topology>
    </subcellularLocation>
</comment>
<comment type="miscellaneous">
    <text evidence="1">Heme 1 (or BL or b562) is low-potential and absorbs at about 562 nm, and heme 2 (or BH or b566) is high-potential and absorbs at about 566 nm.</text>
</comment>
<comment type="similarity">
    <text evidence="3 4">Belongs to the cytochrome b family.</text>
</comment>
<comment type="caution">
    <text evidence="2">The full-length protein contains only eight transmembrane helices, not nine as predicted by bioinformatics tools.</text>
</comment>
<name>CYB_CRANE</name>
<gene>
    <name type="primary">MT-CYB</name>
    <name type="synonym">COB</name>
    <name type="synonym">CYTB</name>
    <name type="synonym">MTCYB</name>
</gene>
<sequence length="379" mass="42820">MTIMRKSHPLMKIVNHAFIDLPTPPNISGWWNFGSLLGLCLVLQILTGLFLAMHYTSDTTTAFSSVTHICRDVNYGWLIRYMHANGASLFFICLYIHIGRGIYYGSYLYTETWNIGILLLFLTMATAFVGYVLPWGQMSFWGATVITNLLSAIPFIGQDLVEWIWGGFSVDKSTLTRFFAFHFILPFIITALAMVHLLFLHETGSNNPLGIPSDCGKVPFHPYYTTKDLLGAILLLMLFMTLVLFFPDKLGDPDNYTPANPLNTPPHIKPEWYFLFAYAILRSIPNKLGGVCALVFSILVLALLPYLHTSKQRSLSFRPLSQTMFWALVSDLIILTWIGGQPVEPPYIIIGQVASILYFSIILILMPMAGLIENKMLKW</sequence>
<proteinExistence type="inferred from homology"/>
<protein>
    <recommendedName>
        <fullName>Cytochrome b</fullName>
    </recommendedName>
    <alternativeName>
        <fullName>Complex III subunit 3</fullName>
    </alternativeName>
    <alternativeName>
        <fullName>Complex III subunit III</fullName>
    </alternativeName>
    <alternativeName>
        <fullName>Cytochrome b-c1 complex subunit 3</fullName>
    </alternativeName>
    <alternativeName>
        <fullName>Ubiquinol-cytochrome-c reductase complex cytochrome b subunit</fullName>
    </alternativeName>
</protein>
<keyword id="KW-0249">Electron transport</keyword>
<keyword id="KW-0349">Heme</keyword>
<keyword id="KW-0408">Iron</keyword>
<keyword id="KW-0472">Membrane</keyword>
<keyword id="KW-0479">Metal-binding</keyword>
<keyword id="KW-0496">Mitochondrion</keyword>
<keyword id="KW-0999">Mitochondrion inner membrane</keyword>
<keyword id="KW-0679">Respiratory chain</keyword>
<keyword id="KW-0812">Transmembrane</keyword>
<keyword id="KW-1133">Transmembrane helix</keyword>
<keyword id="KW-0813">Transport</keyword>
<keyword id="KW-0830">Ubiquinone</keyword>
<reference key="1">
    <citation type="journal article" date="2002" name="Mol. Phylogenet. Evol.">
        <title>Systematics and phylogeography of pocket gophers in the genera Cratogeomys and Pappogeomys.</title>
        <authorList>
            <person name="Demastes J.W."/>
            <person name="Spradling T.A."/>
            <person name="Hafner M.S."/>
            <person name="Hafner D.J."/>
            <person name="Reed D.L."/>
        </authorList>
    </citation>
    <scope>NUCLEOTIDE SEQUENCE [GENOMIC DNA]</scope>
</reference>
<evidence type="ECO:0000250" key="1"/>
<evidence type="ECO:0000250" key="2">
    <source>
        <dbReference type="UniProtKB" id="P00157"/>
    </source>
</evidence>
<evidence type="ECO:0000255" key="3">
    <source>
        <dbReference type="PROSITE-ProRule" id="PRU00967"/>
    </source>
</evidence>
<evidence type="ECO:0000255" key="4">
    <source>
        <dbReference type="PROSITE-ProRule" id="PRU00968"/>
    </source>
</evidence>
<organism>
    <name type="scientific">Cratogeomys neglectus</name>
    <name type="common">Queretaro pocket gopher</name>
    <name type="synonym">Pappogeomys neglectus</name>
    <dbReference type="NCBI Taxonomy" id="76342"/>
    <lineage>
        <taxon>Eukaryota</taxon>
        <taxon>Metazoa</taxon>
        <taxon>Chordata</taxon>
        <taxon>Craniata</taxon>
        <taxon>Vertebrata</taxon>
        <taxon>Euteleostomi</taxon>
        <taxon>Mammalia</taxon>
        <taxon>Eutheria</taxon>
        <taxon>Euarchontoglires</taxon>
        <taxon>Glires</taxon>
        <taxon>Rodentia</taxon>
        <taxon>Castorimorpha</taxon>
        <taxon>Geomyidae</taxon>
        <taxon>Cratogeomys</taxon>
    </lineage>
</organism>
<geneLocation type="mitochondrion"/>